<dbReference type="EMBL" id="AF214945">
    <property type="protein sequence ID" value="AAG60373.1"/>
    <property type="molecule type" value="mRNA"/>
</dbReference>
<dbReference type="ConoServer" id="632">
    <property type="toxin name" value="Ts3.5 precursor"/>
</dbReference>
<dbReference type="GO" id="GO:0005576">
    <property type="term" value="C:extracellular region"/>
    <property type="evidence" value="ECO:0007669"/>
    <property type="project" value="UniProtKB-SubCell"/>
</dbReference>
<dbReference type="GO" id="GO:0008200">
    <property type="term" value="F:ion channel inhibitor activity"/>
    <property type="evidence" value="ECO:0007669"/>
    <property type="project" value="InterPro"/>
</dbReference>
<dbReference type="GO" id="GO:0090729">
    <property type="term" value="F:toxin activity"/>
    <property type="evidence" value="ECO:0007669"/>
    <property type="project" value="UniProtKB-KW"/>
</dbReference>
<dbReference type="InterPro" id="IPR004214">
    <property type="entry name" value="Conotoxin"/>
</dbReference>
<dbReference type="Pfam" id="PF02950">
    <property type="entry name" value="Conotoxin"/>
    <property type="match status" value="1"/>
</dbReference>
<comment type="subcellular location">
    <subcellularLocation>
        <location evidence="4">Secreted</location>
    </subcellularLocation>
</comment>
<comment type="tissue specificity">
    <text evidence="5">Expressed by the venom duct.</text>
</comment>
<comment type="domain">
    <text evidence="4">The cysteine framework is III (CC-C-C-CC). Classified in the M-1 branch, since 1 residue stands between the fourth and the fifth cysteine residues.</text>
</comment>
<comment type="similarity">
    <text evidence="4">Belongs to the conotoxin M superfamily.</text>
</comment>
<reference key="1">
    <citation type="journal article" date="2001" name="Mol. Biol. Evol.">
        <title>Mechanisms for evolving hypervariability: the case of conopeptides.</title>
        <authorList>
            <person name="Conticello S.G."/>
            <person name="Gilad Y."/>
            <person name="Avidan N."/>
            <person name="Ben-Asher E."/>
            <person name="Levy Z."/>
            <person name="Fainzilber M."/>
        </authorList>
    </citation>
    <scope>NUCLEOTIDE SEQUENCE [MRNA]</scope>
    <source>
        <tissue>Venom duct</tissue>
    </source>
</reference>
<accession>Q9BPH9</accession>
<name>CM35_CONTS</name>
<feature type="signal peptide" evidence="3">
    <location>
        <begin position="1"/>
        <end position="24"/>
    </location>
</feature>
<feature type="propeptide" id="PRO_0000404884" evidence="1">
    <location>
        <begin position="25"/>
        <end position="54"/>
    </location>
</feature>
<feature type="peptide" id="PRO_0000404885" description="Conotoxin TsMLKM-012">
    <location>
        <begin position="55"/>
        <end position="72"/>
    </location>
</feature>
<feature type="disulfide bond" evidence="2">
    <location>
        <begin position="56"/>
        <end position="68"/>
    </location>
</feature>
<feature type="disulfide bond" evidence="2">
    <location>
        <begin position="57"/>
        <end position="66"/>
    </location>
</feature>
<feature type="disulfide bond" evidence="2">
    <location>
        <begin position="62"/>
        <end position="69"/>
    </location>
</feature>
<keyword id="KW-1015">Disulfide bond</keyword>
<keyword id="KW-0528">Neurotoxin</keyword>
<keyword id="KW-0964">Secreted</keyword>
<keyword id="KW-0732">Signal</keyword>
<keyword id="KW-0800">Toxin</keyword>
<evidence type="ECO:0000250" key="1"/>
<evidence type="ECO:0000250" key="2">
    <source>
        <dbReference type="UniProtKB" id="Q5EHP3"/>
    </source>
</evidence>
<evidence type="ECO:0000255" key="3"/>
<evidence type="ECO:0000305" key="4"/>
<evidence type="ECO:0000305" key="5">
    <source>
    </source>
</evidence>
<sequence>MLKMGVVLFVFLVLFPLATLQLDADQPVERYAENKQLVSPYERRQIILHALGQRDCCVMPWCDGACDCCVSS</sequence>
<protein>
    <recommendedName>
        <fullName>Conotoxin TsMLKM-012</fullName>
    </recommendedName>
</protein>
<organism>
    <name type="scientific">Conus tessulatus</name>
    <name type="common">Tessellate cone</name>
    <dbReference type="NCBI Taxonomy" id="101317"/>
    <lineage>
        <taxon>Eukaryota</taxon>
        <taxon>Metazoa</taxon>
        <taxon>Spiralia</taxon>
        <taxon>Lophotrochozoa</taxon>
        <taxon>Mollusca</taxon>
        <taxon>Gastropoda</taxon>
        <taxon>Caenogastropoda</taxon>
        <taxon>Neogastropoda</taxon>
        <taxon>Conoidea</taxon>
        <taxon>Conidae</taxon>
        <taxon>Conus</taxon>
        <taxon>Tesselliconus</taxon>
    </lineage>
</organism>
<proteinExistence type="inferred from homology"/>